<feature type="chain" id="PRO_1000138982" description="FMN-dependent NADH:quinone oxidoreductase">
    <location>
        <begin position="1"/>
        <end position="204"/>
    </location>
</feature>
<feature type="binding site" evidence="1">
    <location>
        <position position="9"/>
    </location>
    <ligand>
        <name>FMN</name>
        <dbReference type="ChEBI" id="CHEBI:58210"/>
    </ligand>
</feature>
<feature type="binding site" evidence="1">
    <location>
        <begin position="15"/>
        <end position="17"/>
    </location>
    <ligand>
        <name>FMN</name>
        <dbReference type="ChEBI" id="CHEBI:58210"/>
    </ligand>
</feature>
<feature type="binding site" evidence="1">
    <location>
        <begin position="97"/>
        <end position="100"/>
    </location>
    <ligand>
        <name>FMN</name>
        <dbReference type="ChEBI" id="CHEBI:58210"/>
    </ligand>
</feature>
<proteinExistence type="inferred from homology"/>
<sequence length="204" mass="21176">MKLLHLDASILGTGSVSRELSALIVRRLAGDAPDAVTYRDLVAENPPHLTVATLPGAHPVSAMAGPLDAAGQAVRDASDRMLSEFVAADTVVIGVPMYNFTIPSQLKAWIDRLLVPGTTFRYGAAGPEGLMGGKRVILALARGGFYGPGTASVPAEHAEHYLRTVFGFMGIVPELVLAEGLAAGEHNKAQALASARDAVGQLAA</sequence>
<dbReference type="EC" id="1.6.5.-" evidence="1"/>
<dbReference type="EC" id="1.7.1.17" evidence="1"/>
<dbReference type="EMBL" id="CP001001">
    <property type="protein sequence ID" value="ACB26435.1"/>
    <property type="molecule type" value="Genomic_DNA"/>
</dbReference>
<dbReference type="RefSeq" id="WP_012321388.1">
    <property type="nucleotide sequence ID" value="NC_010505.1"/>
</dbReference>
<dbReference type="SMR" id="B1M4X4"/>
<dbReference type="STRING" id="426355.Mrad2831_4469"/>
<dbReference type="GeneID" id="6140535"/>
<dbReference type="KEGG" id="mrd:Mrad2831_4469"/>
<dbReference type="PATRIC" id="fig|426355.14.peg.4550"/>
<dbReference type="eggNOG" id="COG1182">
    <property type="taxonomic scope" value="Bacteria"/>
</dbReference>
<dbReference type="HOGENOM" id="CLU_088964_0_0_5"/>
<dbReference type="OrthoDB" id="9787136at2"/>
<dbReference type="Proteomes" id="UP000006589">
    <property type="component" value="Chromosome"/>
</dbReference>
<dbReference type="GO" id="GO:0009055">
    <property type="term" value="F:electron transfer activity"/>
    <property type="evidence" value="ECO:0007669"/>
    <property type="project" value="UniProtKB-UniRule"/>
</dbReference>
<dbReference type="GO" id="GO:0010181">
    <property type="term" value="F:FMN binding"/>
    <property type="evidence" value="ECO:0007669"/>
    <property type="project" value="UniProtKB-UniRule"/>
</dbReference>
<dbReference type="GO" id="GO:0016652">
    <property type="term" value="F:oxidoreductase activity, acting on NAD(P)H as acceptor"/>
    <property type="evidence" value="ECO:0007669"/>
    <property type="project" value="UniProtKB-UniRule"/>
</dbReference>
<dbReference type="GO" id="GO:0016655">
    <property type="term" value="F:oxidoreductase activity, acting on NAD(P)H, quinone or similar compound as acceptor"/>
    <property type="evidence" value="ECO:0007669"/>
    <property type="project" value="InterPro"/>
</dbReference>
<dbReference type="Gene3D" id="3.40.50.360">
    <property type="match status" value="1"/>
</dbReference>
<dbReference type="HAMAP" id="MF_01216">
    <property type="entry name" value="Azoreductase_type1"/>
    <property type="match status" value="1"/>
</dbReference>
<dbReference type="InterPro" id="IPR003680">
    <property type="entry name" value="Flavodoxin_fold"/>
</dbReference>
<dbReference type="InterPro" id="IPR029039">
    <property type="entry name" value="Flavoprotein-like_sf"/>
</dbReference>
<dbReference type="InterPro" id="IPR050104">
    <property type="entry name" value="FMN-dep_NADH:Q_OxRdtase_AzoR1"/>
</dbReference>
<dbReference type="InterPro" id="IPR023048">
    <property type="entry name" value="NADH:quinone_OxRdtase_FMN_depd"/>
</dbReference>
<dbReference type="PANTHER" id="PTHR43741">
    <property type="entry name" value="FMN-DEPENDENT NADH-AZOREDUCTASE 1"/>
    <property type="match status" value="1"/>
</dbReference>
<dbReference type="PANTHER" id="PTHR43741:SF4">
    <property type="entry name" value="FMN-DEPENDENT NADH:QUINONE OXIDOREDUCTASE"/>
    <property type="match status" value="1"/>
</dbReference>
<dbReference type="Pfam" id="PF02525">
    <property type="entry name" value="Flavodoxin_2"/>
    <property type="match status" value="1"/>
</dbReference>
<dbReference type="SUPFAM" id="SSF52218">
    <property type="entry name" value="Flavoproteins"/>
    <property type="match status" value="1"/>
</dbReference>
<protein>
    <recommendedName>
        <fullName evidence="1">FMN-dependent NADH:quinone oxidoreductase</fullName>
        <ecNumber evidence="1">1.6.5.-</ecNumber>
    </recommendedName>
    <alternativeName>
        <fullName evidence="1">Azo-dye reductase</fullName>
    </alternativeName>
    <alternativeName>
        <fullName evidence="1">FMN-dependent NADH-azo compound oxidoreductase</fullName>
    </alternativeName>
    <alternativeName>
        <fullName evidence="1">FMN-dependent NADH-azoreductase</fullName>
        <ecNumber evidence="1">1.7.1.17</ecNumber>
    </alternativeName>
</protein>
<evidence type="ECO:0000255" key="1">
    <source>
        <dbReference type="HAMAP-Rule" id="MF_01216"/>
    </source>
</evidence>
<gene>
    <name evidence="1" type="primary">azoR</name>
    <name type="ordered locus">Mrad2831_4469</name>
</gene>
<reference key="1">
    <citation type="submission" date="2008-03" db="EMBL/GenBank/DDBJ databases">
        <title>Complete sequence of chromosome of Methylobacterium radiotolerans JCM 2831.</title>
        <authorList>
            <consortium name="US DOE Joint Genome Institute"/>
            <person name="Copeland A."/>
            <person name="Lucas S."/>
            <person name="Lapidus A."/>
            <person name="Glavina del Rio T."/>
            <person name="Dalin E."/>
            <person name="Tice H."/>
            <person name="Bruce D."/>
            <person name="Goodwin L."/>
            <person name="Pitluck S."/>
            <person name="Kiss H."/>
            <person name="Brettin T."/>
            <person name="Detter J.C."/>
            <person name="Han C."/>
            <person name="Kuske C.R."/>
            <person name="Schmutz J."/>
            <person name="Larimer F."/>
            <person name="Land M."/>
            <person name="Hauser L."/>
            <person name="Kyrpides N."/>
            <person name="Mikhailova N."/>
            <person name="Marx C.J."/>
            <person name="Richardson P."/>
        </authorList>
    </citation>
    <scope>NUCLEOTIDE SEQUENCE [LARGE SCALE GENOMIC DNA]</scope>
    <source>
        <strain>ATCC 27329 / DSM 1819 / JCM 2831 / NBRC 15690 / NCIMB 10815 / 0-1</strain>
    </source>
</reference>
<accession>B1M4X4</accession>
<name>AZOR_METRJ</name>
<organism>
    <name type="scientific">Methylobacterium radiotolerans (strain ATCC 27329 / DSM 1819 / JCM 2831 / NBRC 15690 / NCIMB 10815 / 0-1)</name>
    <dbReference type="NCBI Taxonomy" id="426355"/>
    <lineage>
        <taxon>Bacteria</taxon>
        <taxon>Pseudomonadati</taxon>
        <taxon>Pseudomonadota</taxon>
        <taxon>Alphaproteobacteria</taxon>
        <taxon>Hyphomicrobiales</taxon>
        <taxon>Methylobacteriaceae</taxon>
        <taxon>Methylobacterium</taxon>
    </lineage>
</organism>
<keyword id="KW-0285">Flavoprotein</keyword>
<keyword id="KW-0288">FMN</keyword>
<keyword id="KW-0520">NAD</keyword>
<keyword id="KW-0560">Oxidoreductase</keyword>
<comment type="function">
    <text evidence="1">Quinone reductase that provides resistance to thiol-specific stress caused by electrophilic quinones.</text>
</comment>
<comment type="function">
    <text evidence="1">Also exhibits azoreductase activity. Catalyzes the reductive cleavage of the azo bond in aromatic azo compounds to the corresponding amines.</text>
</comment>
<comment type="catalytic activity">
    <reaction evidence="1">
        <text>2 a quinone + NADH + H(+) = 2 a 1,4-benzosemiquinone + NAD(+)</text>
        <dbReference type="Rhea" id="RHEA:65952"/>
        <dbReference type="ChEBI" id="CHEBI:15378"/>
        <dbReference type="ChEBI" id="CHEBI:57540"/>
        <dbReference type="ChEBI" id="CHEBI:57945"/>
        <dbReference type="ChEBI" id="CHEBI:132124"/>
        <dbReference type="ChEBI" id="CHEBI:134225"/>
    </reaction>
</comment>
<comment type="catalytic activity">
    <reaction evidence="1">
        <text>N,N-dimethyl-1,4-phenylenediamine + anthranilate + 2 NAD(+) = 2-(4-dimethylaminophenyl)diazenylbenzoate + 2 NADH + 2 H(+)</text>
        <dbReference type="Rhea" id="RHEA:55872"/>
        <dbReference type="ChEBI" id="CHEBI:15378"/>
        <dbReference type="ChEBI" id="CHEBI:15783"/>
        <dbReference type="ChEBI" id="CHEBI:16567"/>
        <dbReference type="ChEBI" id="CHEBI:57540"/>
        <dbReference type="ChEBI" id="CHEBI:57945"/>
        <dbReference type="ChEBI" id="CHEBI:71579"/>
        <dbReference type="EC" id="1.7.1.17"/>
    </reaction>
</comment>
<comment type="cofactor">
    <cofactor evidence="1">
        <name>FMN</name>
        <dbReference type="ChEBI" id="CHEBI:58210"/>
    </cofactor>
    <text evidence="1">Binds 1 FMN per subunit.</text>
</comment>
<comment type="subunit">
    <text evidence="1">Homodimer.</text>
</comment>
<comment type="similarity">
    <text evidence="1">Belongs to the azoreductase type 1 family.</text>
</comment>